<feature type="chain" id="PRO_1000070746" description="Urease subunit beta">
    <location>
        <begin position="1"/>
        <end position="105"/>
    </location>
</feature>
<gene>
    <name evidence="1" type="primary">ureB</name>
    <name type="ordered locus">Mkms_2850</name>
</gene>
<dbReference type="EC" id="3.5.1.5" evidence="1"/>
<dbReference type="EMBL" id="CP000518">
    <property type="protein sequence ID" value="ABL92044.1"/>
    <property type="molecule type" value="Genomic_DNA"/>
</dbReference>
<dbReference type="SMR" id="A1UGT6"/>
<dbReference type="STRING" id="189918.Mkms_2850"/>
<dbReference type="KEGG" id="mkm:Mkms_2850"/>
<dbReference type="HOGENOM" id="CLU_129707_1_1_11"/>
<dbReference type="OrthoDB" id="9797217at2"/>
<dbReference type="UniPathway" id="UPA00258">
    <property type="reaction ID" value="UER00370"/>
</dbReference>
<dbReference type="GO" id="GO:0035550">
    <property type="term" value="C:urease complex"/>
    <property type="evidence" value="ECO:0007669"/>
    <property type="project" value="InterPro"/>
</dbReference>
<dbReference type="GO" id="GO:0009039">
    <property type="term" value="F:urease activity"/>
    <property type="evidence" value="ECO:0007669"/>
    <property type="project" value="UniProtKB-UniRule"/>
</dbReference>
<dbReference type="GO" id="GO:0043419">
    <property type="term" value="P:urea catabolic process"/>
    <property type="evidence" value="ECO:0007669"/>
    <property type="project" value="UniProtKB-UniRule"/>
</dbReference>
<dbReference type="CDD" id="cd00407">
    <property type="entry name" value="Urease_beta"/>
    <property type="match status" value="1"/>
</dbReference>
<dbReference type="Gene3D" id="2.10.150.10">
    <property type="entry name" value="Urease, beta subunit"/>
    <property type="match status" value="1"/>
</dbReference>
<dbReference type="HAMAP" id="MF_01954">
    <property type="entry name" value="Urease_beta"/>
    <property type="match status" value="1"/>
</dbReference>
<dbReference type="InterPro" id="IPR002019">
    <property type="entry name" value="Urease_beta-like"/>
</dbReference>
<dbReference type="InterPro" id="IPR036461">
    <property type="entry name" value="Urease_betasu_sf"/>
</dbReference>
<dbReference type="InterPro" id="IPR050069">
    <property type="entry name" value="Urease_subunit"/>
</dbReference>
<dbReference type="NCBIfam" id="NF009682">
    <property type="entry name" value="PRK13203.1"/>
    <property type="match status" value="1"/>
</dbReference>
<dbReference type="NCBIfam" id="TIGR00192">
    <property type="entry name" value="urease_beta"/>
    <property type="match status" value="1"/>
</dbReference>
<dbReference type="PANTHER" id="PTHR33569">
    <property type="entry name" value="UREASE"/>
    <property type="match status" value="1"/>
</dbReference>
<dbReference type="PANTHER" id="PTHR33569:SF1">
    <property type="entry name" value="UREASE"/>
    <property type="match status" value="1"/>
</dbReference>
<dbReference type="Pfam" id="PF00699">
    <property type="entry name" value="Urease_beta"/>
    <property type="match status" value="1"/>
</dbReference>
<dbReference type="SUPFAM" id="SSF51278">
    <property type="entry name" value="Urease, beta-subunit"/>
    <property type="match status" value="1"/>
</dbReference>
<comment type="catalytic activity">
    <reaction evidence="1">
        <text>urea + 2 H2O + H(+) = hydrogencarbonate + 2 NH4(+)</text>
        <dbReference type="Rhea" id="RHEA:20557"/>
        <dbReference type="ChEBI" id="CHEBI:15377"/>
        <dbReference type="ChEBI" id="CHEBI:15378"/>
        <dbReference type="ChEBI" id="CHEBI:16199"/>
        <dbReference type="ChEBI" id="CHEBI:17544"/>
        <dbReference type="ChEBI" id="CHEBI:28938"/>
        <dbReference type="EC" id="3.5.1.5"/>
    </reaction>
</comment>
<comment type="pathway">
    <text evidence="1">Nitrogen metabolism; urea degradation; CO(2) and NH(3) from urea (urease route): step 1/1.</text>
</comment>
<comment type="subunit">
    <text evidence="1">Heterotrimer of UreA (gamma), UreB (beta) and UreC (alpha) subunits. Three heterotrimers associate to form the active enzyme.</text>
</comment>
<comment type="subcellular location">
    <subcellularLocation>
        <location evidence="1">Cytoplasm</location>
    </subcellularLocation>
</comment>
<comment type="similarity">
    <text evidence="1">Belongs to the urease beta subunit family.</text>
</comment>
<evidence type="ECO:0000255" key="1">
    <source>
        <dbReference type="HAMAP-Rule" id="MF_01954"/>
    </source>
</evidence>
<keyword id="KW-0963">Cytoplasm</keyword>
<keyword id="KW-0378">Hydrolase</keyword>
<organism>
    <name type="scientific">Mycobacterium sp. (strain KMS)</name>
    <dbReference type="NCBI Taxonomy" id="189918"/>
    <lineage>
        <taxon>Bacteria</taxon>
        <taxon>Bacillati</taxon>
        <taxon>Actinomycetota</taxon>
        <taxon>Actinomycetes</taxon>
        <taxon>Mycobacteriales</taxon>
        <taxon>Mycobacteriaceae</taxon>
        <taxon>Mycobacterium</taxon>
    </lineage>
</organism>
<reference key="1">
    <citation type="submission" date="2006-12" db="EMBL/GenBank/DDBJ databases">
        <title>Complete sequence of chromosome of Mycobacterium sp. KMS.</title>
        <authorList>
            <consortium name="US DOE Joint Genome Institute"/>
            <person name="Copeland A."/>
            <person name="Lucas S."/>
            <person name="Lapidus A."/>
            <person name="Barry K."/>
            <person name="Detter J.C."/>
            <person name="Glavina del Rio T."/>
            <person name="Hammon N."/>
            <person name="Israni S."/>
            <person name="Dalin E."/>
            <person name="Tice H."/>
            <person name="Pitluck S."/>
            <person name="Kiss H."/>
            <person name="Brettin T."/>
            <person name="Bruce D."/>
            <person name="Han C."/>
            <person name="Tapia R."/>
            <person name="Gilna P."/>
            <person name="Schmutz J."/>
            <person name="Larimer F."/>
            <person name="Land M."/>
            <person name="Hauser L."/>
            <person name="Kyrpides N."/>
            <person name="Mikhailova N."/>
            <person name="Miller C.D."/>
            <person name="Richardson P."/>
        </authorList>
    </citation>
    <scope>NUCLEOTIDE SEQUENCE [LARGE SCALE GENOMIC DNA]</scope>
    <source>
        <strain>KMS</strain>
    </source>
</reference>
<accession>A1UGT6</accession>
<protein>
    <recommendedName>
        <fullName evidence="1">Urease subunit beta</fullName>
        <ecNumber evidence="1">3.5.1.5</ecNumber>
    </recommendedName>
    <alternativeName>
        <fullName evidence="1">Urea amidohydrolase subunit beta</fullName>
    </alternativeName>
</protein>
<name>URE2_MYCSK</name>
<proteinExistence type="inferred from homology"/>
<sequence length="105" mass="11128">MVPGEIFFGEGDVEINAGARRLEMEIVNTGDRPVQVGSHVHLPQANAALDFDRTAARGHRLDVPAGTAVRFEPGVAQRVRLVPLGGSREVHGLSLNPPGRLDGAS</sequence>